<accession>B2SEQ6</accession>
<name>MUTS_FRATM</name>
<protein>
    <recommendedName>
        <fullName evidence="1">DNA mismatch repair protein MutS</fullName>
    </recommendedName>
</protein>
<sequence>MQDISNHTPMIQQYLKIKSQYQDILLFYRMGDFYELFFDDAKKAAELLDITLTARGKSNGESIPMAGVPYHAAEAYIAKIVKKGLSIAICEQTGDPNTSKGPVERQVTRIITPATVSEEAFLDNNQDSILVSIFEKNNKYYLAYTSYTQGKIYLVKTLTSLNELKNTVLKLSPQEIITNSRELAQQNPFKKPIKALEEWYYSNFEAKKYINDSLDTNIANNILNLYKNDKLTTIGSILSYLTNILKDTPRHITDISYEQEQDTLNIDINSRINLELDNNSKSSLLSIIGKCKTSLGSRLLKRYFSNPTRNLNILATRHSIINSLGENQHFLKIQDVLSYISDIERIISRVALGTVKPKDLVALRDSLEQLPILKKLLSEKNTPEITNINNRIHQLDELVTLLDKAIIENPPTTIRDGGVIKEGFDKELDELKSIKDNSYDFLIKFEELQKQKTGISTLKVGYNRVHGYYIELSKQHADKIPTEYVRRQTLKASERYITEELKNFEDKVLSSKEKALAREKLIYDTLLKKVIEYYKQIQETAASIAEIDVLANFAERAIKLKLSQPKFNNLAKLELKEVRHLAIEHNIDEPFIPNDTLLSKDTNTLQIITGPNMGGKSTYMRQVAQLIFLAYIGSFVPASYADICDIDTIYTRIGASDDISSGRSTFMVEMTETAYILNNASAKSLVIMDEIGRGTSTFDGLALAKACAEKFAQIGAFTLFATHYFELTELAKQYPNVCNIHFEAKEYKDNIYFMHKAVTGAAKKSYGIQVAKLAGISQDVLESAKQNLYNLEKKQQLTESTQVQAQFQLEPTTQNPLQQKLDAIDINTITPLEALNILFELKKR</sequence>
<comment type="function">
    <text evidence="1">This protein is involved in the repair of mismatches in DNA. It is possible that it carries out the mismatch recognition step. This protein has a weak ATPase activity.</text>
</comment>
<comment type="similarity">
    <text evidence="1">Belongs to the DNA mismatch repair MutS family.</text>
</comment>
<feature type="chain" id="PRO_1000093628" description="DNA mismatch repair protein MutS">
    <location>
        <begin position="1"/>
        <end position="844"/>
    </location>
</feature>
<feature type="binding site" evidence="1">
    <location>
        <begin position="610"/>
        <end position="617"/>
    </location>
    <ligand>
        <name>ATP</name>
        <dbReference type="ChEBI" id="CHEBI:30616"/>
    </ligand>
</feature>
<keyword id="KW-0067">ATP-binding</keyword>
<keyword id="KW-0227">DNA damage</keyword>
<keyword id="KW-0234">DNA repair</keyword>
<keyword id="KW-0238">DNA-binding</keyword>
<keyword id="KW-0547">Nucleotide-binding</keyword>
<evidence type="ECO:0000255" key="1">
    <source>
        <dbReference type="HAMAP-Rule" id="MF_00096"/>
    </source>
</evidence>
<proteinExistence type="inferred from homology"/>
<reference key="1">
    <citation type="journal article" date="2009" name="PLoS Pathog.">
        <title>Molecular evolutionary consequences of niche restriction in Francisella tularensis, a facultative intracellular pathogen.</title>
        <authorList>
            <person name="Larsson P."/>
            <person name="Elfsmark D."/>
            <person name="Svensson K."/>
            <person name="Wikstroem P."/>
            <person name="Forsman M."/>
            <person name="Brettin T."/>
            <person name="Keim P."/>
            <person name="Johansson A."/>
        </authorList>
    </citation>
    <scope>NUCLEOTIDE SEQUENCE [LARGE SCALE GENOMIC DNA]</scope>
    <source>
        <strain>FSC147</strain>
    </source>
</reference>
<dbReference type="EMBL" id="CP000915">
    <property type="protein sequence ID" value="ACD30432.1"/>
    <property type="molecule type" value="Genomic_DNA"/>
</dbReference>
<dbReference type="SMR" id="B2SEQ6"/>
<dbReference type="KEGG" id="ftm:FTM_0398"/>
<dbReference type="HOGENOM" id="CLU_002472_4_0_6"/>
<dbReference type="GO" id="GO:0005829">
    <property type="term" value="C:cytosol"/>
    <property type="evidence" value="ECO:0007669"/>
    <property type="project" value="TreeGrafter"/>
</dbReference>
<dbReference type="GO" id="GO:0005524">
    <property type="term" value="F:ATP binding"/>
    <property type="evidence" value="ECO:0007669"/>
    <property type="project" value="UniProtKB-UniRule"/>
</dbReference>
<dbReference type="GO" id="GO:0140664">
    <property type="term" value="F:ATP-dependent DNA damage sensor activity"/>
    <property type="evidence" value="ECO:0007669"/>
    <property type="project" value="InterPro"/>
</dbReference>
<dbReference type="GO" id="GO:0003684">
    <property type="term" value="F:damaged DNA binding"/>
    <property type="evidence" value="ECO:0007669"/>
    <property type="project" value="UniProtKB-UniRule"/>
</dbReference>
<dbReference type="GO" id="GO:0030983">
    <property type="term" value="F:mismatched DNA binding"/>
    <property type="evidence" value="ECO:0007669"/>
    <property type="project" value="InterPro"/>
</dbReference>
<dbReference type="GO" id="GO:0006298">
    <property type="term" value="P:mismatch repair"/>
    <property type="evidence" value="ECO:0007669"/>
    <property type="project" value="UniProtKB-UniRule"/>
</dbReference>
<dbReference type="FunFam" id="1.10.1420.10:FF:000002">
    <property type="entry name" value="DNA mismatch repair protein MutS"/>
    <property type="match status" value="1"/>
</dbReference>
<dbReference type="FunFam" id="3.40.1170.10:FF:000001">
    <property type="entry name" value="DNA mismatch repair protein MutS"/>
    <property type="match status" value="1"/>
</dbReference>
<dbReference type="FunFam" id="3.40.50.300:FF:000870">
    <property type="entry name" value="MutS protein homolog 4"/>
    <property type="match status" value="1"/>
</dbReference>
<dbReference type="Gene3D" id="1.10.1420.10">
    <property type="match status" value="2"/>
</dbReference>
<dbReference type="Gene3D" id="3.40.1170.10">
    <property type="entry name" value="DNA repair protein MutS, domain I"/>
    <property type="match status" value="1"/>
</dbReference>
<dbReference type="Gene3D" id="3.30.420.110">
    <property type="entry name" value="MutS, connector domain"/>
    <property type="match status" value="1"/>
</dbReference>
<dbReference type="Gene3D" id="3.40.50.300">
    <property type="entry name" value="P-loop containing nucleotide triphosphate hydrolases"/>
    <property type="match status" value="1"/>
</dbReference>
<dbReference type="HAMAP" id="MF_00096">
    <property type="entry name" value="MutS"/>
    <property type="match status" value="1"/>
</dbReference>
<dbReference type="InterPro" id="IPR005748">
    <property type="entry name" value="DNA_mismatch_repair_MutS"/>
</dbReference>
<dbReference type="InterPro" id="IPR007695">
    <property type="entry name" value="DNA_mismatch_repair_MutS-lik_N"/>
</dbReference>
<dbReference type="InterPro" id="IPR017261">
    <property type="entry name" value="DNA_mismatch_repair_MutS/MSH"/>
</dbReference>
<dbReference type="InterPro" id="IPR000432">
    <property type="entry name" value="DNA_mismatch_repair_MutS_C"/>
</dbReference>
<dbReference type="InterPro" id="IPR007861">
    <property type="entry name" value="DNA_mismatch_repair_MutS_clamp"/>
</dbReference>
<dbReference type="InterPro" id="IPR007696">
    <property type="entry name" value="DNA_mismatch_repair_MutS_core"/>
</dbReference>
<dbReference type="InterPro" id="IPR016151">
    <property type="entry name" value="DNA_mismatch_repair_MutS_N"/>
</dbReference>
<dbReference type="InterPro" id="IPR036187">
    <property type="entry name" value="DNA_mismatch_repair_MutS_sf"/>
</dbReference>
<dbReference type="InterPro" id="IPR007860">
    <property type="entry name" value="DNA_mmatch_repair_MutS_con_dom"/>
</dbReference>
<dbReference type="InterPro" id="IPR045076">
    <property type="entry name" value="MutS"/>
</dbReference>
<dbReference type="InterPro" id="IPR036678">
    <property type="entry name" value="MutS_con_dom_sf"/>
</dbReference>
<dbReference type="InterPro" id="IPR027417">
    <property type="entry name" value="P-loop_NTPase"/>
</dbReference>
<dbReference type="NCBIfam" id="TIGR01070">
    <property type="entry name" value="mutS1"/>
    <property type="match status" value="1"/>
</dbReference>
<dbReference type="NCBIfam" id="NF003810">
    <property type="entry name" value="PRK05399.1"/>
    <property type="match status" value="1"/>
</dbReference>
<dbReference type="PANTHER" id="PTHR11361:SF34">
    <property type="entry name" value="DNA MISMATCH REPAIR PROTEIN MSH1, MITOCHONDRIAL"/>
    <property type="match status" value="1"/>
</dbReference>
<dbReference type="PANTHER" id="PTHR11361">
    <property type="entry name" value="DNA MISMATCH REPAIR PROTEIN MUTS FAMILY MEMBER"/>
    <property type="match status" value="1"/>
</dbReference>
<dbReference type="Pfam" id="PF01624">
    <property type="entry name" value="MutS_I"/>
    <property type="match status" value="1"/>
</dbReference>
<dbReference type="Pfam" id="PF05188">
    <property type="entry name" value="MutS_II"/>
    <property type="match status" value="1"/>
</dbReference>
<dbReference type="Pfam" id="PF05192">
    <property type="entry name" value="MutS_III"/>
    <property type="match status" value="1"/>
</dbReference>
<dbReference type="Pfam" id="PF05190">
    <property type="entry name" value="MutS_IV"/>
    <property type="match status" value="1"/>
</dbReference>
<dbReference type="Pfam" id="PF00488">
    <property type="entry name" value="MutS_V"/>
    <property type="match status" value="1"/>
</dbReference>
<dbReference type="PIRSF" id="PIRSF037677">
    <property type="entry name" value="DNA_mis_repair_Msh6"/>
    <property type="match status" value="1"/>
</dbReference>
<dbReference type="SMART" id="SM00534">
    <property type="entry name" value="MUTSac"/>
    <property type="match status" value="1"/>
</dbReference>
<dbReference type="SMART" id="SM00533">
    <property type="entry name" value="MUTSd"/>
    <property type="match status" value="1"/>
</dbReference>
<dbReference type="SUPFAM" id="SSF55271">
    <property type="entry name" value="DNA repair protein MutS, domain I"/>
    <property type="match status" value="1"/>
</dbReference>
<dbReference type="SUPFAM" id="SSF53150">
    <property type="entry name" value="DNA repair protein MutS, domain II"/>
    <property type="match status" value="1"/>
</dbReference>
<dbReference type="SUPFAM" id="SSF48334">
    <property type="entry name" value="DNA repair protein MutS, domain III"/>
    <property type="match status" value="1"/>
</dbReference>
<dbReference type="SUPFAM" id="SSF52540">
    <property type="entry name" value="P-loop containing nucleoside triphosphate hydrolases"/>
    <property type="match status" value="1"/>
</dbReference>
<dbReference type="PROSITE" id="PS00486">
    <property type="entry name" value="DNA_MISMATCH_REPAIR_2"/>
    <property type="match status" value="1"/>
</dbReference>
<gene>
    <name evidence="1" type="primary">mutS</name>
    <name type="ordered locus">FTM_0398</name>
</gene>
<organism>
    <name type="scientific">Francisella tularensis subsp. mediasiatica (strain FSC147)</name>
    <dbReference type="NCBI Taxonomy" id="441952"/>
    <lineage>
        <taxon>Bacteria</taxon>
        <taxon>Pseudomonadati</taxon>
        <taxon>Pseudomonadota</taxon>
        <taxon>Gammaproteobacteria</taxon>
        <taxon>Thiotrichales</taxon>
        <taxon>Francisellaceae</taxon>
        <taxon>Francisella</taxon>
    </lineage>
</organism>